<evidence type="ECO:0000255" key="1">
    <source>
        <dbReference type="HAMAP-Rule" id="MF_00366"/>
    </source>
</evidence>
<evidence type="ECO:0000256" key="2">
    <source>
        <dbReference type="SAM" id="MobiDB-lite"/>
    </source>
</evidence>
<feature type="chain" id="PRO_1000121191" description="DNA-directed RNA polymerase subunit omega">
    <location>
        <begin position="1"/>
        <end position="131"/>
    </location>
</feature>
<feature type="region of interest" description="Disordered" evidence="2">
    <location>
        <begin position="78"/>
        <end position="131"/>
    </location>
</feature>
<feature type="compositionally biased region" description="Basic and acidic residues" evidence="2">
    <location>
        <begin position="104"/>
        <end position="115"/>
    </location>
</feature>
<name>RPOZ_BEII9</name>
<gene>
    <name evidence="1" type="primary">rpoZ</name>
    <name type="ordered locus">Bind_2446</name>
</gene>
<accession>B2IIA1</accession>
<comment type="function">
    <text evidence="1">Promotes RNA polymerase assembly. Latches the N- and C-terminal regions of the beta' subunit thereby facilitating its interaction with the beta and alpha subunits.</text>
</comment>
<comment type="catalytic activity">
    <reaction evidence="1">
        <text>RNA(n) + a ribonucleoside 5'-triphosphate = RNA(n+1) + diphosphate</text>
        <dbReference type="Rhea" id="RHEA:21248"/>
        <dbReference type="Rhea" id="RHEA-COMP:14527"/>
        <dbReference type="Rhea" id="RHEA-COMP:17342"/>
        <dbReference type="ChEBI" id="CHEBI:33019"/>
        <dbReference type="ChEBI" id="CHEBI:61557"/>
        <dbReference type="ChEBI" id="CHEBI:140395"/>
        <dbReference type="EC" id="2.7.7.6"/>
    </reaction>
</comment>
<comment type="subunit">
    <text evidence="1">The RNAP catalytic core consists of 2 alpha, 1 beta, 1 beta' and 1 omega subunit. When a sigma factor is associated with the core the holoenzyme is formed, which can initiate transcription.</text>
</comment>
<comment type="similarity">
    <text evidence="1">Belongs to the RNA polymerase subunit omega family.</text>
</comment>
<organism>
    <name type="scientific">Beijerinckia indica subsp. indica (strain ATCC 9039 / DSM 1715 / NCIMB 8712)</name>
    <dbReference type="NCBI Taxonomy" id="395963"/>
    <lineage>
        <taxon>Bacteria</taxon>
        <taxon>Pseudomonadati</taxon>
        <taxon>Pseudomonadota</taxon>
        <taxon>Alphaproteobacteria</taxon>
        <taxon>Hyphomicrobiales</taxon>
        <taxon>Beijerinckiaceae</taxon>
        <taxon>Beijerinckia</taxon>
    </lineage>
</organism>
<sequence>MARVTVEDCIDKVENRFELVLLASHRARLIASGTPITVERDNDKNPVVALREIADETLTPEDLKEDFIQSLQKHVEVDEPEAEAVPALSSAPDAAQSDAMGDVQFDRMTEEDLLRGLEGLVPPAATDDDGE</sequence>
<reference key="1">
    <citation type="journal article" date="2010" name="J. Bacteriol.">
        <title>Complete genome sequence of Beijerinckia indica subsp. indica.</title>
        <authorList>
            <person name="Tamas I."/>
            <person name="Dedysh S.N."/>
            <person name="Liesack W."/>
            <person name="Stott M.B."/>
            <person name="Alam M."/>
            <person name="Murrell J.C."/>
            <person name="Dunfield P.F."/>
        </authorList>
    </citation>
    <scope>NUCLEOTIDE SEQUENCE [LARGE SCALE GENOMIC DNA]</scope>
    <source>
        <strain>ATCC 9039 / DSM 1715 / NCIMB 8712</strain>
    </source>
</reference>
<keyword id="KW-0240">DNA-directed RNA polymerase</keyword>
<keyword id="KW-0548">Nucleotidyltransferase</keyword>
<keyword id="KW-1185">Reference proteome</keyword>
<keyword id="KW-0804">Transcription</keyword>
<keyword id="KW-0808">Transferase</keyword>
<protein>
    <recommendedName>
        <fullName evidence="1">DNA-directed RNA polymerase subunit omega</fullName>
        <shortName evidence="1">RNAP omega subunit</shortName>
        <ecNumber evidence="1">2.7.7.6</ecNumber>
    </recommendedName>
    <alternativeName>
        <fullName evidence="1">RNA polymerase omega subunit</fullName>
    </alternativeName>
    <alternativeName>
        <fullName evidence="1">Transcriptase subunit omega</fullName>
    </alternativeName>
</protein>
<dbReference type="EC" id="2.7.7.6" evidence="1"/>
<dbReference type="EMBL" id="CP001016">
    <property type="protein sequence ID" value="ACB96055.1"/>
    <property type="molecule type" value="Genomic_DNA"/>
</dbReference>
<dbReference type="RefSeq" id="WP_012385408.1">
    <property type="nucleotide sequence ID" value="NC_010581.1"/>
</dbReference>
<dbReference type="SMR" id="B2IIA1"/>
<dbReference type="STRING" id="395963.Bind_2446"/>
<dbReference type="KEGG" id="bid:Bind_2446"/>
<dbReference type="eggNOG" id="COG1758">
    <property type="taxonomic scope" value="Bacteria"/>
</dbReference>
<dbReference type="HOGENOM" id="CLU_125406_2_0_5"/>
<dbReference type="OrthoDB" id="9796300at2"/>
<dbReference type="Proteomes" id="UP000001695">
    <property type="component" value="Chromosome"/>
</dbReference>
<dbReference type="GO" id="GO:0000428">
    <property type="term" value="C:DNA-directed RNA polymerase complex"/>
    <property type="evidence" value="ECO:0007669"/>
    <property type="project" value="UniProtKB-KW"/>
</dbReference>
<dbReference type="GO" id="GO:0003677">
    <property type="term" value="F:DNA binding"/>
    <property type="evidence" value="ECO:0007669"/>
    <property type="project" value="UniProtKB-UniRule"/>
</dbReference>
<dbReference type="GO" id="GO:0003899">
    <property type="term" value="F:DNA-directed RNA polymerase activity"/>
    <property type="evidence" value="ECO:0007669"/>
    <property type="project" value="UniProtKB-UniRule"/>
</dbReference>
<dbReference type="GO" id="GO:0006351">
    <property type="term" value="P:DNA-templated transcription"/>
    <property type="evidence" value="ECO:0007669"/>
    <property type="project" value="UniProtKB-UniRule"/>
</dbReference>
<dbReference type="Gene3D" id="3.90.940.10">
    <property type="match status" value="1"/>
</dbReference>
<dbReference type="HAMAP" id="MF_00366">
    <property type="entry name" value="RNApol_bact_RpoZ"/>
    <property type="match status" value="1"/>
</dbReference>
<dbReference type="InterPro" id="IPR003716">
    <property type="entry name" value="DNA-dir_RNA_pol_omega"/>
</dbReference>
<dbReference type="InterPro" id="IPR006110">
    <property type="entry name" value="Pol_omega/Rpo6/RPB6"/>
</dbReference>
<dbReference type="InterPro" id="IPR036161">
    <property type="entry name" value="RPB6/omega-like_sf"/>
</dbReference>
<dbReference type="NCBIfam" id="TIGR00690">
    <property type="entry name" value="rpoZ"/>
    <property type="match status" value="1"/>
</dbReference>
<dbReference type="PANTHER" id="PTHR34476">
    <property type="entry name" value="DNA-DIRECTED RNA POLYMERASE SUBUNIT OMEGA"/>
    <property type="match status" value="1"/>
</dbReference>
<dbReference type="PANTHER" id="PTHR34476:SF1">
    <property type="entry name" value="DNA-DIRECTED RNA POLYMERASE SUBUNIT OMEGA"/>
    <property type="match status" value="1"/>
</dbReference>
<dbReference type="Pfam" id="PF01192">
    <property type="entry name" value="RNA_pol_Rpb6"/>
    <property type="match status" value="1"/>
</dbReference>
<dbReference type="SMART" id="SM01409">
    <property type="entry name" value="RNA_pol_Rpb6"/>
    <property type="match status" value="1"/>
</dbReference>
<dbReference type="SUPFAM" id="SSF63562">
    <property type="entry name" value="RPB6/omega subunit-like"/>
    <property type="match status" value="1"/>
</dbReference>
<proteinExistence type="inferred from homology"/>